<reference key="1">
    <citation type="journal article" date="2003" name="Proc. Natl. Acad. Sci. U.S.A.">
        <title>Genomewide screening for fusogenic human endogenous retrovirus envelopes identifies syncytin 2, a gene conserved on primate evolution.</title>
        <authorList>
            <person name="Blaise S."/>
            <person name="de Parseval N."/>
            <person name="Benit L."/>
            <person name="Heidmann T."/>
        </authorList>
    </citation>
    <scope>NUCLEOTIDE SEQUENCE [GENOMIC DNA]</scope>
</reference>
<reference key="2">
    <citation type="journal article" date="2004" name="J. Virol.">
        <title>Identification of an envelope protein from the FRD family of human endogenous retroviruses (HERV-FRD) conferring infectivity and functional conservation among simians.</title>
        <authorList>
            <person name="Blaise S."/>
            <person name="Ruggieri A."/>
            <person name="Dewannieux M."/>
            <person name="Cosset F.-L."/>
            <person name="Heidmann T."/>
        </authorList>
    </citation>
    <scope>FUNCTION</scope>
</reference>
<feature type="signal peptide" evidence="5">
    <location>
        <begin position="1"/>
        <end position="15"/>
    </location>
</feature>
<feature type="chain" id="PRO_0000008448" description="Syncytin-2">
    <location>
        <begin position="16"/>
        <end position="538"/>
    </location>
</feature>
<feature type="chain" id="PRO_0000008449" description="Surface protein" evidence="1">
    <location>
        <begin position="16"/>
        <end position="350"/>
    </location>
</feature>
<feature type="chain" id="PRO_0000008450" description="Transmembrane protein" evidence="1">
    <location>
        <begin position="351"/>
        <end position="538"/>
    </location>
</feature>
<feature type="topological domain" description="Extracellular" evidence="5">
    <location>
        <begin position="31"/>
        <end position="478"/>
    </location>
</feature>
<feature type="transmembrane region" description="Helical" evidence="5">
    <location>
        <begin position="479"/>
        <end position="499"/>
    </location>
</feature>
<feature type="topological domain" description="Cytoplasmic" evidence="5">
    <location>
        <begin position="500"/>
        <end position="538"/>
    </location>
</feature>
<feature type="region of interest" description="Fusion peptide" evidence="5">
    <location>
        <begin position="354"/>
        <end position="374"/>
    </location>
</feature>
<feature type="short sequence motif" description="CXXC" evidence="7">
    <location>
        <begin position="43"/>
        <end position="46"/>
    </location>
</feature>
<feature type="short sequence motif" description="CKS-17" evidence="1">
    <location>
        <begin position="414"/>
        <end position="430"/>
    </location>
</feature>
<feature type="short sequence motif" description="CX6CC" evidence="7">
    <location>
        <begin position="431"/>
        <end position="439"/>
    </location>
</feature>
<feature type="site" description="Cleavage" evidence="4">
    <location>
        <begin position="350"/>
        <end position="351"/>
    </location>
</feature>
<feature type="glycosylation site" description="N-linked (GlcNAc...) asparagine" evidence="5">
    <location>
        <position position="133"/>
    </location>
</feature>
<feature type="glycosylation site" description="N-linked (GlcNAc...) asparagine" evidence="5">
    <location>
        <position position="146"/>
    </location>
</feature>
<feature type="glycosylation site" description="N-linked (GlcNAc...) asparagine" evidence="5">
    <location>
        <position position="177"/>
    </location>
</feature>
<feature type="glycosylation site" description="N-linked (GlcNAc...) asparagine" evidence="5">
    <location>
        <position position="220"/>
    </location>
</feature>
<feature type="glycosylation site" description="N-linked (GlcNAc...) asparagine" evidence="5">
    <location>
        <position position="241"/>
    </location>
</feature>
<feature type="glycosylation site" description="N-linked (GlcNAc...) asparagine" evidence="5">
    <location>
        <position position="247"/>
    </location>
</feature>
<feature type="glycosylation site" description="N-linked (GlcNAc...) asparagine" evidence="5">
    <location>
        <position position="312"/>
    </location>
</feature>
<feature type="glycosylation site" description="N-linked (GlcNAc...) asparagine" evidence="5">
    <location>
        <position position="332"/>
    </location>
</feature>
<feature type="glycosylation site" description="N-linked (GlcNAc...) asparagine" evidence="5">
    <location>
        <position position="443"/>
    </location>
</feature>
<feature type="disulfide bond" description="Interchain (between SU and TM chains, or C-46 with C-439); in linked form" evidence="4">
    <location>
        <begin position="43"/>
        <end position="439"/>
    </location>
</feature>
<feature type="disulfide bond" evidence="2">
    <location>
        <begin position="43"/>
        <end position="46"/>
    </location>
</feature>
<feature type="disulfide bond" evidence="3">
    <location>
        <begin position="431"/>
        <end position="438"/>
    </location>
</feature>
<name>SYCY2_HYLML</name>
<dbReference type="EMBL" id="AJ577598">
    <property type="protein sequence ID" value="CAE12265.1"/>
    <property type="molecule type" value="Genomic_DNA"/>
</dbReference>
<dbReference type="RefSeq" id="XP_031996992.1">
    <property type="nucleotide sequence ID" value="XM_032141101.2"/>
</dbReference>
<dbReference type="SMR" id="P61555"/>
<dbReference type="GlyCosmos" id="P61555">
    <property type="glycosylation" value="9 sites, No reported glycans"/>
</dbReference>
<dbReference type="GeneID" id="116460169"/>
<dbReference type="GO" id="GO:0005886">
    <property type="term" value="C:plasma membrane"/>
    <property type="evidence" value="ECO:0007669"/>
    <property type="project" value="UniProtKB-SubCell"/>
</dbReference>
<dbReference type="GO" id="GO:0006949">
    <property type="term" value="P:syncytium formation"/>
    <property type="evidence" value="ECO:0000250"/>
    <property type="project" value="UniProtKB"/>
</dbReference>
<dbReference type="GO" id="GO:0000768">
    <property type="term" value="P:syncytium formation by plasma membrane fusion"/>
    <property type="evidence" value="ECO:0000314"/>
    <property type="project" value="UniProtKB"/>
</dbReference>
<dbReference type="CDD" id="cd09851">
    <property type="entry name" value="HTLV-1-like_HR1-HR2"/>
    <property type="match status" value="1"/>
</dbReference>
<dbReference type="FunFam" id="1.10.287.210:FF:000002">
    <property type="entry name" value="Syncytin-2"/>
    <property type="match status" value="1"/>
</dbReference>
<dbReference type="Gene3D" id="1.10.287.210">
    <property type="match status" value="1"/>
</dbReference>
<dbReference type="InterPro" id="IPR018154">
    <property type="entry name" value="TLV/ENV_coat_polyprotein"/>
</dbReference>
<dbReference type="PANTHER" id="PTHR10424:SF85">
    <property type="entry name" value="SYNCYTIN-2"/>
    <property type="match status" value="1"/>
</dbReference>
<dbReference type="PANTHER" id="PTHR10424">
    <property type="entry name" value="VIRAL ENVELOPE PROTEIN"/>
    <property type="match status" value="1"/>
</dbReference>
<dbReference type="Pfam" id="PF00429">
    <property type="entry name" value="TLV_coat"/>
    <property type="match status" value="1"/>
</dbReference>
<dbReference type="SUPFAM" id="SSF58069">
    <property type="entry name" value="Virus ectodomain"/>
    <property type="match status" value="1"/>
</dbReference>
<sequence length="538" mass="59657">MGLLLLVLILTPLLAAYRHPDFPLLEKAQQLLQSTGSPYSTNCWLCTSSSTETPGTAYPASPREWTSIEAELHISYQWDPNLKGLMRPANSLLSTVKQDFPDIRQKPPIFGPIFTNINLMGIAPICVTAKRKNGTNVGTLPSTVCNVTFTVDPNQQTYQTYTHNQFRHQPRFPKPPNITFPQGTLLDKSTRFCQGRPSSCSTRNFWFRPADYNQCLQISNLSSTAEWVLLDQTRNSLFWENKTKGANQSQTPCVQVLAGMTIATSYLGISAVSEFFGNSLTPLFHFHISTCLKTQGAFYICGQSIHQCLPSNWTGTCTIGYVTPDIFIAPGNLSLPIPIYGKSQLPRVRRAIHFIPLLAGLGILAGTGTGIAGITKASLTYSQLSKEIANNIDTMAKTLTTVQEQIDSLAAVVLQNRRGLDMLTAAQGGICLALDEKCCFWVNQSGKVQDNIRQLLNQASSLRERATQGWLNWEGTWKWFSWVLPFIGPFVSLLLLLLFGPCLLNLITQFVSSRLQAIKLQTNLSAGRRPRTIQESPF</sequence>
<organism>
    <name type="scientific">Hylobates moloch</name>
    <name type="common">Silvery gibbon</name>
    <dbReference type="NCBI Taxonomy" id="81572"/>
    <lineage>
        <taxon>Eukaryota</taxon>
        <taxon>Metazoa</taxon>
        <taxon>Chordata</taxon>
        <taxon>Craniata</taxon>
        <taxon>Vertebrata</taxon>
        <taxon>Euteleostomi</taxon>
        <taxon>Mammalia</taxon>
        <taxon>Eutheria</taxon>
        <taxon>Euarchontoglires</taxon>
        <taxon>Primates</taxon>
        <taxon>Haplorrhini</taxon>
        <taxon>Catarrhini</taxon>
        <taxon>Hylobatidae</taxon>
        <taxon>Hylobates</taxon>
    </lineage>
</organism>
<comment type="function">
    <text evidence="1">This endogenous retroviral envelope protein has retained its original fusogenic properties and participates in trophoblast fusion and the formation of a syncytium during placenta morphogenesis. The interaction with MFSD2A is apparently important for this process (By similarity).</text>
</comment>
<comment type="function">
    <text evidence="6">Endogenous envelope proteins may have kept, lost or modified their original function during evolution and this one is unable to confer infectivity.</text>
</comment>
<comment type="subunit">
    <text evidence="1">The surface and transmembrane proteins form a heterodimer. They are attached by non-covalent interactions or by a labile interchain disulfide bond (By similarity).</text>
</comment>
<comment type="subcellular location">
    <molecule>Surface protein</molecule>
    <subcellularLocation>
        <location evidence="7">Cell membrane</location>
        <topology evidence="7">Peripheral membrane protein</topology>
    </subcellularLocation>
    <text evidence="4">The surface protein is not anchored to the membrane, but localizes to the extracellular surface through its binding to TM.</text>
</comment>
<comment type="subcellular location">
    <molecule>Transmembrane protein</molecule>
    <subcellularLocation>
        <location evidence="7">Cell membrane</location>
        <topology evidence="5">Single-pass membrane protein</topology>
    </subcellularLocation>
</comment>
<comment type="domain">
    <text evidence="1">The CKS-17 immunosuppressive domain is present in many retroviral envelope proteins. As a synthetic peptide, it inhibits immune function in vitro and in vivo (By similarity).</text>
</comment>
<comment type="PTM">
    <text evidence="1">Specific enzymatic cleavages in vivo yield the mature SU and TM proteins.</text>
</comment>
<comment type="PTM">
    <text evidence="1">The CXXC motif is highly conserved across a broad range of retroviral envelope proteins. It is thought to participate in the formation of a labile disulfide bond possibly with the CX6CC motif present in the transmembrane protein (By similarity).</text>
</comment>
<comment type="miscellaneous">
    <text>In contrast with its primate orthologs, this envelope does not confer infectivity to pseudotyped virions. This is due to a N to T transition at position 532 in the cytoplasmic tail of the TM protein.</text>
</comment>
<comment type="miscellaneous">
    <text>Ortholog of the human HERV-FRD_6p24.1 envelope protein.</text>
</comment>
<comment type="miscellaneous">
    <text>The genome contains a high percentage of proviral-like elements, also called endogenous retroviruses (ERVs) that are the genomic traces of ancient infections of the germline by exogenous retroviruses. Although most of these elements are defective, some have conserved a functional envelope (env) gene, most probably diverted by the host for its benefit.</text>
</comment>
<comment type="similarity">
    <text evidence="7">Belongs to the gamma type-C retroviral envelope protein family. HERV class-I FRD env subfamily.</text>
</comment>
<comment type="caution">
    <text evidence="7">CKS-17 sequence does not match the minimal active consensus.</text>
</comment>
<evidence type="ECO:0000250" key="1"/>
<evidence type="ECO:0000250" key="2">
    <source>
        <dbReference type="UniProtKB" id="P23064"/>
    </source>
</evidence>
<evidence type="ECO:0000250" key="3">
    <source>
        <dbReference type="UniProtKB" id="P60508"/>
    </source>
</evidence>
<evidence type="ECO:0000250" key="4">
    <source>
        <dbReference type="UniProtKB" id="Q9UQF0"/>
    </source>
</evidence>
<evidence type="ECO:0000255" key="5"/>
<evidence type="ECO:0000269" key="6">
    <source>
    </source>
</evidence>
<evidence type="ECO:0000305" key="7"/>
<protein>
    <recommendedName>
        <fullName>Syncytin-2</fullName>
    </recommendedName>
    <alternativeName>
        <fullName>ERV-FRD provirus ancestral Env polyprotein</fullName>
    </alternativeName>
    <alternativeName>
        <fullName>Envelope polyprotein</fullName>
    </alternativeName>
    <component>
        <recommendedName>
            <fullName>Surface protein</fullName>
            <shortName>SU</shortName>
        </recommendedName>
    </component>
    <component>
        <recommendedName>
            <fullName>Transmembrane protein</fullName>
            <shortName>TM</shortName>
        </recommendedName>
    </component>
</protein>
<accession>P61555</accession>
<proteinExistence type="inferred from homology"/>
<keyword id="KW-1003">Cell membrane</keyword>
<keyword id="KW-0165">Cleavage on pair of basic residues</keyword>
<keyword id="KW-1015">Disulfide bond</keyword>
<keyword id="KW-0895">ERV</keyword>
<keyword id="KW-0325">Glycoprotein</keyword>
<keyword id="KW-0472">Membrane</keyword>
<keyword id="KW-0732">Signal</keyword>
<keyword id="KW-0812">Transmembrane</keyword>
<keyword id="KW-1133">Transmembrane helix</keyword>
<keyword id="KW-0814">Transposable element</keyword>
<gene>
    <name type="primary">ERVFRD-1</name>
    <name type="synonym">ERVFRDE1</name>
</gene>